<comment type="function">
    <text evidence="1">Required during biogenesis of c-type cytochromes (cytochrome c6 and cytochrome f) at the step of heme attachment.</text>
</comment>
<comment type="subunit">
    <text evidence="1">May interact with Ccs1.</text>
</comment>
<comment type="subcellular location">
    <subcellularLocation>
        <location evidence="1">Plastid</location>
        <location evidence="1">Chloroplast thylakoid membrane</location>
        <topology evidence="1">Multi-pass membrane protein</topology>
    </subcellularLocation>
</comment>
<comment type="similarity">
    <text evidence="1">Belongs to the CcmF/CycK/Ccl1/NrfE/CcsA family.</text>
</comment>
<sequence length="321" mass="37020">MIFVTLEHILTHISFSIISIVITIHLMTLLIHKIAGLCDSSEKGIISTFFSITGLLITRWIYSGHFPLSNLYESLIFLSWSFSIIHMIPYLRNHKNDLSVITVPSVIFTQGFVTSCLSTEMRQSAILVPALKSQWLIMHVSMMLLSYATLLCGSLLSVALLVITFRKNMDIFCKRKNFLIKSFFFAETEYLNKKRSVFKNTSFLSFRNYYKYQLTQRLDYWTYRIISLGFIFLTMGILSGAVWANEAWGSYWNWDPKETWAFITWTIFAIYSHIRININFQGTNPALVASIGFLIIWICYFGINLLGIGLHSYGSFTLPSN</sequence>
<reference key="1">
    <citation type="journal article" date="2007" name="Mol. Phylogenet. Evol.">
        <title>Phylogenetic and evolutionary implications of complete chloroplast genome sequences of four early-diverging angiosperms: Buxus (Buxaceae), Chloranthus (Chloranthaceae), Dioscorea (Dioscoreaceae), and Illicium (Schisandraceae).</title>
        <authorList>
            <person name="Hansen D.R."/>
            <person name="Dastidar S.G."/>
            <person name="Cai Z."/>
            <person name="Penaflor C."/>
            <person name="Kuehl J.V."/>
            <person name="Boore J.L."/>
            <person name="Jansen R.K."/>
        </authorList>
    </citation>
    <scope>NUCLEOTIDE SEQUENCE [LARGE SCALE GENOMIC DNA]</scope>
</reference>
<protein>
    <recommendedName>
        <fullName evidence="1">Cytochrome c biogenesis protein CcsA</fullName>
    </recommendedName>
</protein>
<geneLocation type="chloroplast"/>
<organism>
    <name type="scientific">Dioscorea elephantipes</name>
    <name type="common">Elephant's foot yam</name>
    <name type="synonym">Testudinaria elephantipes</name>
    <dbReference type="NCBI Taxonomy" id="145284"/>
    <lineage>
        <taxon>Eukaryota</taxon>
        <taxon>Viridiplantae</taxon>
        <taxon>Streptophyta</taxon>
        <taxon>Embryophyta</taxon>
        <taxon>Tracheophyta</taxon>
        <taxon>Spermatophyta</taxon>
        <taxon>Magnoliopsida</taxon>
        <taxon>Liliopsida</taxon>
        <taxon>Dioscoreales</taxon>
        <taxon>Dioscoreaceae</taxon>
        <taxon>Dioscorea</taxon>
    </lineage>
</organism>
<feature type="chain" id="PRO_0000353749" description="Cytochrome c biogenesis protein CcsA">
    <location>
        <begin position="1"/>
        <end position="321"/>
    </location>
</feature>
<feature type="transmembrane region" description="Helical" evidence="1">
    <location>
        <begin position="9"/>
        <end position="29"/>
    </location>
</feature>
<feature type="transmembrane region" description="Helical" evidence="1">
    <location>
        <begin position="44"/>
        <end position="64"/>
    </location>
</feature>
<feature type="transmembrane region" description="Helical" evidence="1">
    <location>
        <begin position="71"/>
        <end position="91"/>
    </location>
</feature>
<feature type="transmembrane region" description="Helical" evidence="1">
    <location>
        <begin position="98"/>
        <end position="118"/>
    </location>
</feature>
<feature type="transmembrane region" description="Helical" evidence="1">
    <location>
        <begin position="143"/>
        <end position="163"/>
    </location>
</feature>
<feature type="transmembrane region" description="Helical" evidence="1">
    <location>
        <begin position="225"/>
        <end position="245"/>
    </location>
</feature>
<feature type="transmembrane region" description="Helical" evidence="1">
    <location>
        <begin position="260"/>
        <end position="280"/>
    </location>
</feature>
<feature type="transmembrane region" description="Helical" evidence="1">
    <location>
        <begin position="288"/>
        <end position="308"/>
    </location>
</feature>
<proteinExistence type="inferred from homology"/>
<dbReference type="EMBL" id="EF380353">
    <property type="protein sequence ID" value="ABR01486.1"/>
    <property type="molecule type" value="Genomic_DNA"/>
</dbReference>
<dbReference type="RefSeq" id="YP_001294409.1">
    <property type="nucleotide sequence ID" value="NC_009601.1"/>
</dbReference>
<dbReference type="SMR" id="A6MMR4"/>
<dbReference type="GeneID" id="5236560"/>
<dbReference type="GO" id="GO:0009535">
    <property type="term" value="C:chloroplast thylakoid membrane"/>
    <property type="evidence" value="ECO:0007669"/>
    <property type="project" value="UniProtKB-SubCell"/>
</dbReference>
<dbReference type="GO" id="GO:0005886">
    <property type="term" value="C:plasma membrane"/>
    <property type="evidence" value="ECO:0007669"/>
    <property type="project" value="TreeGrafter"/>
</dbReference>
<dbReference type="GO" id="GO:0020037">
    <property type="term" value="F:heme binding"/>
    <property type="evidence" value="ECO:0007669"/>
    <property type="project" value="InterPro"/>
</dbReference>
<dbReference type="GO" id="GO:0017004">
    <property type="term" value="P:cytochrome complex assembly"/>
    <property type="evidence" value="ECO:0007669"/>
    <property type="project" value="UniProtKB-UniRule"/>
</dbReference>
<dbReference type="HAMAP" id="MF_01391">
    <property type="entry name" value="CytC_CcsA"/>
    <property type="match status" value="1"/>
</dbReference>
<dbReference type="InterPro" id="IPR002541">
    <property type="entry name" value="Cyt_c_assembly"/>
</dbReference>
<dbReference type="InterPro" id="IPR017562">
    <property type="entry name" value="Cyt_c_biogenesis_CcsA"/>
</dbReference>
<dbReference type="InterPro" id="IPR045062">
    <property type="entry name" value="Cyt_c_biogenesis_CcsA/CcmC"/>
</dbReference>
<dbReference type="NCBIfam" id="TIGR03144">
    <property type="entry name" value="cytochr_II_ccsB"/>
    <property type="match status" value="1"/>
</dbReference>
<dbReference type="PANTHER" id="PTHR30071:SF1">
    <property type="entry name" value="CYTOCHROME B_B6 PROTEIN-RELATED"/>
    <property type="match status" value="1"/>
</dbReference>
<dbReference type="PANTHER" id="PTHR30071">
    <property type="entry name" value="HEME EXPORTER PROTEIN C"/>
    <property type="match status" value="1"/>
</dbReference>
<dbReference type="Pfam" id="PF01578">
    <property type="entry name" value="Cytochrom_C_asm"/>
    <property type="match status" value="1"/>
</dbReference>
<name>CCSA_DIOEL</name>
<gene>
    <name evidence="1" type="primary">ccsA</name>
</gene>
<evidence type="ECO:0000255" key="1">
    <source>
        <dbReference type="HAMAP-Rule" id="MF_01391"/>
    </source>
</evidence>
<accession>A6MMR4</accession>
<keyword id="KW-0150">Chloroplast</keyword>
<keyword id="KW-0201">Cytochrome c-type biogenesis</keyword>
<keyword id="KW-0472">Membrane</keyword>
<keyword id="KW-0934">Plastid</keyword>
<keyword id="KW-0793">Thylakoid</keyword>
<keyword id="KW-0812">Transmembrane</keyword>
<keyword id="KW-1133">Transmembrane helix</keyword>